<sequence>MTISPPEREEKKARVIVDKDPVPTSFEKWAQPGHFDRTLARGPKTTTWIWNLHALAHDFDTHTSDLEDISRKIFAAHFGHLAVVTIWLSGMIFHGAKFSNYEAWLSDPLNVRPSAQVVWPIVGQDILNGDVGGGFHGIQITSGLFQVWRGWGITNSFQLYCTAIGGLVLAGLFLFAGWFHYHKRAPKLEWFQNVESMLNHHLQVLLGCGSLGWAGHLIHVSAPINKLLDAGVAVKDIPLPHEFILNKSVLIDLFPGFAAGLTPFFTLNWGQYADFLTFKGGLNPVTGGLWLTDISHHHLAIAVLFIIAGHQYRTNWGIGHSIKEILENHKGPFTGEGHKGLYENLTTSWHAQLATNLAFLGSLTIIIAHHMYAMPPYPYLATDYATQLCIFTHHIWIGGFLIVGGAAHAAIFMVRDYDPVVNQNNVLDRVIRHRDAIISHLNWVCIFLGFHSFGLYIHNDTMRALGRPQDMFSDTAIQLQPVFAQWVQNLHTLAPGGTAPNALEPVSYAFGGGVLAVGGKVAMMPIALGTADFLIHHIHAFTIHVTVLILLKGVLFARSSRLIPDKANLGFRFPCDGPGRGGTCQVSGWDHVFLGLFWMYNSLSIVIFHFSWKMQSDVWGTVDAAGNVSHITGGNFAQSAITINGWLRDFLWAQASQVINSYGSALSAYGLMFLGAHFVWAFSLMFLFSGRGYWQELIESIVWAHNKLKVAPAIQPRALSITQGRAVGVAHYLLGGIATTWAFFHAHILSVG</sequence>
<comment type="function">
    <text>PsaA and PsaB bind P700, the primary electron donor of photosystem I (PSI), as well as the electron acceptors A0, A1 and FX. PSI is a plastocyanin/cytochrome c6-ferredoxin oxidoreductase, converting photonic excitation into a charge separation, which transfers an electron from the donor P700 chlorophyll pair to the spectroscopically characterized acceptors A0, A1, FX, FA and FB in turn. Oxidized P700 is reduced on the lumenal side of the thylakoid membrane by plastocyanin or cytochrome c6.</text>
</comment>
<comment type="catalytic activity">
    <reaction>
        <text>reduced [plastocyanin] + hnu + oxidized [2Fe-2S]-[ferredoxin] = oxidized [plastocyanin] + reduced [2Fe-2S]-[ferredoxin]</text>
        <dbReference type="Rhea" id="RHEA:30407"/>
        <dbReference type="Rhea" id="RHEA-COMP:10000"/>
        <dbReference type="Rhea" id="RHEA-COMP:10001"/>
        <dbReference type="Rhea" id="RHEA-COMP:10039"/>
        <dbReference type="Rhea" id="RHEA-COMP:10040"/>
        <dbReference type="ChEBI" id="CHEBI:29036"/>
        <dbReference type="ChEBI" id="CHEBI:30212"/>
        <dbReference type="ChEBI" id="CHEBI:33737"/>
        <dbReference type="ChEBI" id="CHEBI:33738"/>
        <dbReference type="ChEBI" id="CHEBI:49552"/>
        <dbReference type="EC" id="1.97.1.12"/>
    </reaction>
</comment>
<comment type="cofactor">
    <text evidence="1">PSI electron transfer chain: 5 chlorophyll a, 1 chlorophyll a', 2 phylloquinones and 3 4Fe-4S clusters. PSI core antenna: 90 chlorophyll a, 22 carotenoids, 3 phospholipids and 1 galactolipid. P700 is a chlorophyll a/chlorophyll a' dimer, A0 is one or more chlorophyll a, A1 is one or both phylloquinones and FX is a shared 4Fe-4S iron-sulfur center.</text>
</comment>
<comment type="subunit">
    <text>The PsaA/B heterodimer binds the P700 chlorophyll special pair and subsequent electron acceptors. PSI consists of a core antenna complex that captures photons, and an electron transfer chain that converts photonic excitation into a charge separation. The cyanobacterial PSI reaction center is composed of one copy each of PsaA,B,C,D,E,F,I,J,K,L,M and X, and forms trimeric complexes.</text>
</comment>
<comment type="subcellular location">
    <subcellularLocation>
        <location>Cellular thylakoid membrane</location>
        <topology>Multi-pass membrane protein</topology>
    </subcellularLocation>
</comment>
<comment type="PTM">
    <text>The N-terminus is blocked.</text>
</comment>
<comment type="similarity">
    <text evidence="3">Belongs to the PsaA/PsaB family.</text>
</comment>
<organism>
    <name type="scientific">Trichormus variabilis (strain ATCC 29413 / PCC 7937)</name>
    <name type="common">Anabaena variabilis</name>
    <dbReference type="NCBI Taxonomy" id="240292"/>
    <lineage>
        <taxon>Bacteria</taxon>
        <taxon>Bacillati</taxon>
        <taxon>Cyanobacteriota</taxon>
        <taxon>Cyanophyceae</taxon>
        <taxon>Nostocales</taxon>
        <taxon>Nostocaceae</taxon>
        <taxon>Trichormus</taxon>
    </lineage>
</organism>
<name>PSAA_TRIV2</name>
<gene>
    <name type="primary">psaA</name>
    <name type="ordered locus">Ava_2405</name>
</gene>
<dbReference type="EC" id="1.97.1.12"/>
<dbReference type="EMBL" id="L26326">
    <property type="protein sequence ID" value="AAA18488.1"/>
    <property type="molecule type" value="Unassigned_DNA"/>
</dbReference>
<dbReference type="EMBL" id="CP000117">
    <property type="protein sequence ID" value="ABA22022.1"/>
    <property type="molecule type" value="Genomic_DNA"/>
</dbReference>
<dbReference type="PIR" id="I39615">
    <property type="entry name" value="I39615"/>
</dbReference>
<dbReference type="SMR" id="Q44550"/>
<dbReference type="STRING" id="240292.Ava_2405"/>
<dbReference type="KEGG" id="ava:Ava_2405"/>
<dbReference type="eggNOG" id="COG2885">
    <property type="taxonomic scope" value="Bacteria"/>
</dbReference>
<dbReference type="HOGENOM" id="CLU_016126_1_0_3"/>
<dbReference type="Proteomes" id="UP000002533">
    <property type="component" value="Chromosome"/>
</dbReference>
<dbReference type="GO" id="GO:0009522">
    <property type="term" value="C:photosystem I"/>
    <property type="evidence" value="ECO:0007669"/>
    <property type="project" value="UniProtKB-KW"/>
</dbReference>
<dbReference type="GO" id="GO:0031676">
    <property type="term" value="C:plasma membrane-derived thylakoid membrane"/>
    <property type="evidence" value="ECO:0007669"/>
    <property type="project" value="UniProtKB-SubCell"/>
</dbReference>
<dbReference type="GO" id="GO:0051539">
    <property type="term" value="F:4 iron, 4 sulfur cluster binding"/>
    <property type="evidence" value="ECO:0007669"/>
    <property type="project" value="UniProtKB-KW"/>
</dbReference>
<dbReference type="GO" id="GO:0016168">
    <property type="term" value="F:chlorophyll binding"/>
    <property type="evidence" value="ECO:0007669"/>
    <property type="project" value="UniProtKB-KW"/>
</dbReference>
<dbReference type="GO" id="GO:0009055">
    <property type="term" value="F:electron transfer activity"/>
    <property type="evidence" value="ECO:0007669"/>
    <property type="project" value="UniProtKB-UniRule"/>
</dbReference>
<dbReference type="GO" id="GO:0000287">
    <property type="term" value="F:magnesium ion binding"/>
    <property type="evidence" value="ECO:0007669"/>
    <property type="project" value="UniProtKB-UniRule"/>
</dbReference>
<dbReference type="GO" id="GO:0016491">
    <property type="term" value="F:oxidoreductase activity"/>
    <property type="evidence" value="ECO:0007669"/>
    <property type="project" value="UniProtKB-KW"/>
</dbReference>
<dbReference type="GO" id="GO:0015979">
    <property type="term" value="P:photosynthesis"/>
    <property type="evidence" value="ECO:0007669"/>
    <property type="project" value="UniProtKB-UniRule"/>
</dbReference>
<dbReference type="Gene3D" id="1.20.1130.10">
    <property type="entry name" value="Photosystem I PsaA/PsaB"/>
    <property type="match status" value="1"/>
</dbReference>
<dbReference type="HAMAP" id="MF_00458">
    <property type="entry name" value="PSI_PsaA"/>
    <property type="match status" value="1"/>
</dbReference>
<dbReference type="InterPro" id="IPR006243">
    <property type="entry name" value="PSI_PsaA"/>
</dbReference>
<dbReference type="InterPro" id="IPR001280">
    <property type="entry name" value="PSI_PsaA/B"/>
</dbReference>
<dbReference type="InterPro" id="IPR020586">
    <property type="entry name" value="PSI_PsaA/B_CS"/>
</dbReference>
<dbReference type="InterPro" id="IPR036408">
    <property type="entry name" value="PSI_PsaA/B_sf"/>
</dbReference>
<dbReference type="NCBIfam" id="TIGR01335">
    <property type="entry name" value="psaA"/>
    <property type="match status" value="1"/>
</dbReference>
<dbReference type="PANTHER" id="PTHR30128">
    <property type="entry name" value="OUTER MEMBRANE PROTEIN, OMPA-RELATED"/>
    <property type="match status" value="1"/>
</dbReference>
<dbReference type="PANTHER" id="PTHR30128:SF19">
    <property type="entry name" value="PHOTOSYSTEM I P700 CHLOROPHYLL A APOPROTEIN A1-RELATED"/>
    <property type="match status" value="1"/>
</dbReference>
<dbReference type="Pfam" id="PF00223">
    <property type="entry name" value="PsaA_PsaB"/>
    <property type="match status" value="1"/>
</dbReference>
<dbReference type="PIRSF" id="PIRSF002905">
    <property type="entry name" value="PSI_A"/>
    <property type="match status" value="1"/>
</dbReference>
<dbReference type="PRINTS" id="PR00257">
    <property type="entry name" value="PHOTSYSPSAAB"/>
</dbReference>
<dbReference type="SUPFAM" id="SSF81558">
    <property type="entry name" value="Photosystem I subunits PsaA/PsaB"/>
    <property type="match status" value="1"/>
</dbReference>
<dbReference type="PROSITE" id="PS00419">
    <property type="entry name" value="PHOTOSYSTEM_I_PSAAB"/>
    <property type="match status" value="1"/>
</dbReference>
<keyword id="KW-0004">4Fe-4S</keyword>
<keyword id="KW-0148">Chlorophyll</keyword>
<keyword id="KW-0157">Chromophore</keyword>
<keyword id="KW-0249">Electron transport</keyword>
<keyword id="KW-0408">Iron</keyword>
<keyword id="KW-0411">Iron-sulfur</keyword>
<keyword id="KW-0460">Magnesium</keyword>
<keyword id="KW-0472">Membrane</keyword>
<keyword id="KW-0479">Metal-binding</keyword>
<keyword id="KW-0560">Oxidoreductase</keyword>
<keyword id="KW-0602">Photosynthesis</keyword>
<keyword id="KW-0603">Photosystem I</keyword>
<keyword id="KW-0793">Thylakoid</keyword>
<keyword id="KW-0812">Transmembrane</keyword>
<keyword id="KW-1133">Transmembrane helix</keyword>
<keyword id="KW-0813">Transport</keyword>
<reference key="1">
    <citation type="journal article" date="1994" name="Biochim. Biophys. Acta">
        <title>Nucleotide sequences of the psaA and the psaB genes encoding the reaction center proteins of photosystem I in Anabaena variabilis ATCC 29413.</title>
        <authorList>
            <person name="Nyhus K.J."/>
            <person name="Sonoike K."/>
            <person name="Pakrasi H.B."/>
        </authorList>
    </citation>
    <scope>NUCLEOTIDE SEQUENCE [GENOMIC DNA]</scope>
</reference>
<reference key="2">
    <citation type="journal article" date="2014" name="Stand. Genomic Sci.">
        <title>Complete genome sequence of Anabaena variabilis ATCC 29413.</title>
        <authorList>
            <person name="Thiel T."/>
            <person name="Pratte B.S."/>
            <person name="Zhong J."/>
            <person name="Goodwin L."/>
            <person name="Copeland A."/>
            <person name="Lucas S."/>
            <person name="Han C."/>
            <person name="Pitluck S."/>
            <person name="Land M.L."/>
            <person name="Kyrpides N.C."/>
            <person name="Woyke T."/>
        </authorList>
    </citation>
    <scope>NUCLEOTIDE SEQUENCE [LARGE SCALE GENOMIC DNA]</scope>
    <source>
        <strain>ATCC 29413 / PCC 7937</strain>
    </source>
</reference>
<reference key="3">
    <citation type="journal article" date="1992" name="J. Biol. Chem.">
        <title>Purification and characterization of the photosystem I complex from the filamentous cyanobacterium Anabaena variabilis ATCC 29413.</title>
        <authorList>
            <person name="Nyhus K.J."/>
            <person name="Ikeuchi M."/>
            <person name="Inoue Y."/>
            <person name="Whitmarsh J."/>
            <person name="Pakrasi H.B."/>
        </authorList>
    </citation>
    <scope>CHARACTERIZATION</scope>
    <scope>BLOCKAGE OF N-TERMINUS</scope>
</reference>
<protein>
    <recommendedName>
        <fullName>Photosystem I P700 chlorophyll a apoprotein A1</fullName>
        <ecNumber>1.97.1.12</ecNumber>
    </recommendedName>
    <alternativeName>
        <fullName>PsaA</fullName>
    </alternativeName>
</protein>
<feature type="chain" id="PRO_0000088584" description="Photosystem I P700 chlorophyll a apoprotein A1">
    <location>
        <begin position="1"/>
        <end position="752"/>
    </location>
</feature>
<feature type="transmembrane region" description="Helical; Name=I" evidence="2">
    <location>
        <begin position="73"/>
        <end position="96"/>
    </location>
</feature>
<feature type="transmembrane region" description="Helical; Name=II" evidence="2">
    <location>
        <begin position="159"/>
        <end position="182"/>
    </location>
</feature>
<feature type="transmembrane region" description="Helical; Name=III" evidence="2">
    <location>
        <begin position="198"/>
        <end position="222"/>
    </location>
</feature>
<feature type="transmembrane region" description="Helical; Name=IV" evidence="2">
    <location>
        <begin position="294"/>
        <end position="312"/>
    </location>
</feature>
<feature type="transmembrane region" description="Helical; Name=V" evidence="2">
    <location>
        <begin position="349"/>
        <end position="372"/>
    </location>
</feature>
<feature type="transmembrane region" description="Helical; Name=VI" evidence="2">
    <location>
        <begin position="388"/>
        <end position="414"/>
    </location>
</feature>
<feature type="transmembrane region" description="Helical; Name=VII" evidence="2">
    <location>
        <begin position="436"/>
        <end position="458"/>
    </location>
</feature>
<feature type="transmembrane region" description="Helical; Name=VIII" evidence="2">
    <location>
        <begin position="533"/>
        <end position="551"/>
    </location>
</feature>
<feature type="transmembrane region" description="Helical; Name=IX" evidence="2">
    <location>
        <begin position="591"/>
        <end position="612"/>
    </location>
</feature>
<feature type="transmembrane region" description="Helical; Name=X" evidence="2">
    <location>
        <begin position="666"/>
        <end position="688"/>
    </location>
</feature>
<feature type="transmembrane region" description="Helical; Name=XI" evidence="2">
    <location>
        <begin position="726"/>
        <end position="746"/>
    </location>
</feature>
<feature type="binding site" evidence="1">
    <location>
        <position position="575"/>
    </location>
    <ligand>
        <name>[4Fe-4S] cluster</name>
        <dbReference type="ChEBI" id="CHEBI:49883"/>
        <note>ligand shared between dimeric partners</note>
    </ligand>
</feature>
<feature type="binding site" evidence="1">
    <location>
        <position position="584"/>
    </location>
    <ligand>
        <name>[4Fe-4S] cluster</name>
        <dbReference type="ChEBI" id="CHEBI:49883"/>
        <note>ligand shared between dimeric partners</note>
    </ligand>
</feature>
<feature type="binding site" description="axial binding residue" evidence="1">
    <location>
        <position position="677"/>
    </location>
    <ligand>
        <name>chlorophyll a'</name>
        <dbReference type="ChEBI" id="CHEBI:189419"/>
        <label>A1</label>
    </ligand>
    <ligandPart>
        <name>Mg</name>
        <dbReference type="ChEBI" id="CHEBI:25107"/>
    </ligandPart>
</feature>
<feature type="binding site" description="axial binding residue" evidence="1">
    <location>
        <position position="685"/>
    </location>
    <ligand>
        <name>chlorophyll a</name>
        <dbReference type="ChEBI" id="CHEBI:58416"/>
        <label>A3</label>
    </ligand>
    <ligandPart>
        <name>Mg</name>
        <dbReference type="ChEBI" id="CHEBI:25107"/>
    </ligandPart>
</feature>
<feature type="binding site" evidence="1">
    <location>
        <position position="693"/>
    </location>
    <ligand>
        <name>chlorophyll a</name>
        <dbReference type="ChEBI" id="CHEBI:58416"/>
        <label>A3</label>
    </ligand>
</feature>
<feature type="binding site" evidence="1">
    <location>
        <position position="694"/>
    </location>
    <ligand>
        <name>phylloquinone</name>
        <dbReference type="ChEBI" id="CHEBI:18067"/>
        <label>A</label>
    </ligand>
</feature>
<proteinExistence type="evidence at protein level"/>
<evidence type="ECO:0000250" key="1"/>
<evidence type="ECO:0000255" key="2"/>
<evidence type="ECO:0000305" key="3"/>
<accession>Q44550</accession>
<accession>Q3MAG4</accession>